<feature type="chain" id="PRO_0000065286" description="Uncharacterized protein F10E9.2">
    <location>
        <begin position="1"/>
        <end position="286"/>
    </location>
</feature>
<feature type="region of interest" description="Disordered" evidence="1">
    <location>
        <begin position="1"/>
        <end position="38"/>
    </location>
</feature>
<feature type="region of interest" description="Disordered" evidence="1">
    <location>
        <begin position="108"/>
        <end position="146"/>
    </location>
</feature>
<feature type="region of interest" description="Disordered" evidence="1">
    <location>
        <begin position="196"/>
        <end position="227"/>
    </location>
</feature>
<feature type="region of interest" description="Disordered" evidence="1">
    <location>
        <begin position="241"/>
        <end position="286"/>
    </location>
</feature>
<feature type="compositionally biased region" description="Low complexity" evidence="1">
    <location>
        <begin position="18"/>
        <end position="29"/>
    </location>
</feature>
<feature type="compositionally biased region" description="Basic and acidic residues" evidence="1">
    <location>
        <begin position="243"/>
        <end position="268"/>
    </location>
</feature>
<feature type="compositionally biased region" description="Polar residues" evidence="1">
    <location>
        <begin position="269"/>
        <end position="278"/>
    </location>
</feature>
<sequence length="286" mass="31609">MSQKKKASLSKIHTGMNSSSKQVLSSTSSANEKTEDDVGDEMDFSLQCDACKKLIIGLNNLDRFDCGHFYCLVCSPLQPKENHSSCATSTSPSNAFTREVSPQQIAEHTGELSNNGAERGKIRGSTRATRKGSVNKSKSGRTRRHKKVPDQRLWYFLYLSKPVVVSLPTDATYHDLMARLYTLLGVSGKTHMITLRTQKSSSEEGEGEFSGRGDPAPLEVGDSKTRLSDLKITRHKMLLLDVDDQKKDGSGEEKKEKKSAEKEKKISHENVQSLSPSSRAEDPRSS</sequence>
<accession>P34396</accession>
<dbReference type="EMBL" id="FO081105">
    <property type="protein sequence ID" value="CCD69129.1"/>
    <property type="molecule type" value="Genomic_DNA"/>
</dbReference>
<dbReference type="PIR" id="S44801">
    <property type="entry name" value="S44801"/>
</dbReference>
<dbReference type="RefSeq" id="NP_498827.1">
    <property type="nucleotide sequence ID" value="NM_066426.2"/>
</dbReference>
<dbReference type="FunCoup" id="P34396">
    <property type="interactions" value="1524"/>
</dbReference>
<dbReference type="STRING" id="6239.F10E9.2.1"/>
<dbReference type="PaxDb" id="6239-F10E9.2"/>
<dbReference type="EnsemblMetazoa" id="F10E9.2.1">
    <property type="protein sequence ID" value="F10E9.2.1"/>
    <property type="gene ID" value="WBGene00017354"/>
</dbReference>
<dbReference type="GeneID" id="176171"/>
<dbReference type="KEGG" id="cel:CELE_F10E9.2"/>
<dbReference type="UCSC" id="F10E9.2">
    <property type="organism name" value="c. elegans"/>
</dbReference>
<dbReference type="AGR" id="WB:WBGene00017354"/>
<dbReference type="CTD" id="176171"/>
<dbReference type="WormBase" id="F10E9.2">
    <property type="protein sequence ID" value="CE24893"/>
    <property type="gene ID" value="WBGene00017354"/>
</dbReference>
<dbReference type="eggNOG" id="ENOG502TG5C">
    <property type="taxonomic scope" value="Eukaryota"/>
</dbReference>
<dbReference type="HOGENOM" id="CLU_1090815_0_0_1"/>
<dbReference type="InParanoid" id="P34396"/>
<dbReference type="OMA" id="PRQKMLI"/>
<dbReference type="OrthoDB" id="5852758at2759"/>
<dbReference type="PRO" id="PR:P34396"/>
<dbReference type="Proteomes" id="UP000001940">
    <property type="component" value="Chromosome III"/>
</dbReference>
<dbReference type="Bgee" id="WBGene00017354">
    <property type="expression patterns" value="Expressed in adult organism and 1 other cell type or tissue"/>
</dbReference>
<reference key="1">
    <citation type="journal article" date="1994" name="Nature">
        <title>2.2 Mb of contiguous nucleotide sequence from chromosome III of C. elegans.</title>
        <authorList>
            <person name="Wilson R."/>
            <person name="Ainscough R."/>
            <person name="Anderson K."/>
            <person name="Baynes C."/>
            <person name="Berks M."/>
            <person name="Bonfield J."/>
            <person name="Burton J."/>
            <person name="Connell M."/>
            <person name="Copsey T."/>
            <person name="Cooper J."/>
            <person name="Coulson A."/>
            <person name="Craxton M."/>
            <person name="Dear S."/>
            <person name="Du Z."/>
            <person name="Durbin R."/>
            <person name="Favello A."/>
            <person name="Fraser A."/>
            <person name="Fulton L."/>
            <person name="Gardner A."/>
            <person name="Green P."/>
            <person name="Hawkins T."/>
            <person name="Hillier L."/>
            <person name="Jier M."/>
            <person name="Johnston L."/>
            <person name="Jones M."/>
            <person name="Kershaw J."/>
            <person name="Kirsten J."/>
            <person name="Laisster N."/>
            <person name="Latreille P."/>
            <person name="Lightning J."/>
            <person name="Lloyd C."/>
            <person name="Mortimore B."/>
            <person name="O'Callaghan M."/>
            <person name="Parsons J."/>
            <person name="Percy C."/>
            <person name="Rifken L."/>
            <person name="Roopra A."/>
            <person name="Saunders D."/>
            <person name="Shownkeen R."/>
            <person name="Sims M."/>
            <person name="Smaldon N."/>
            <person name="Smith A."/>
            <person name="Smith M."/>
            <person name="Sonnhammer E."/>
            <person name="Staden R."/>
            <person name="Sulston J."/>
            <person name="Thierry-Mieg J."/>
            <person name="Thomas K."/>
            <person name="Vaudin M."/>
            <person name="Vaughan K."/>
            <person name="Waterston R."/>
            <person name="Watson A."/>
            <person name="Weinstock L."/>
            <person name="Wilkinson-Sproat J."/>
            <person name="Wohldman P."/>
        </authorList>
    </citation>
    <scope>NUCLEOTIDE SEQUENCE [LARGE SCALE GENOMIC DNA]</scope>
    <source>
        <strain>Bristol N2</strain>
    </source>
</reference>
<reference key="2">
    <citation type="journal article" date="1998" name="Science">
        <title>Genome sequence of the nematode C. elegans: a platform for investigating biology.</title>
        <authorList>
            <consortium name="The C. elegans sequencing consortium"/>
        </authorList>
    </citation>
    <scope>NUCLEOTIDE SEQUENCE [LARGE SCALE GENOMIC DNA]</scope>
    <source>
        <strain>Bristol N2</strain>
    </source>
</reference>
<organism>
    <name type="scientific">Caenorhabditis elegans</name>
    <dbReference type="NCBI Taxonomy" id="6239"/>
    <lineage>
        <taxon>Eukaryota</taxon>
        <taxon>Metazoa</taxon>
        <taxon>Ecdysozoa</taxon>
        <taxon>Nematoda</taxon>
        <taxon>Chromadorea</taxon>
        <taxon>Rhabditida</taxon>
        <taxon>Rhabditina</taxon>
        <taxon>Rhabditomorpha</taxon>
        <taxon>Rhabditoidea</taxon>
        <taxon>Rhabditidae</taxon>
        <taxon>Peloderinae</taxon>
        <taxon>Caenorhabditis</taxon>
    </lineage>
</organism>
<proteinExistence type="predicted"/>
<name>YLU2_CAEEL</name>
<gene>
    <name type="ORF">F10E9.2</name>
</gene>
<keyword id="KW-1185">Reference proteome</keyword>
<protein>
    <recommendedName>
        <fullName>Uncharacterized protein F10E9.2</fullName>
    </recommendedName>
</protein>
<evidence type="ECO:0000256" key="1">
    <source>
        <dbReference type="SAM" id="MobiDB-lite"/>
    </source>
</evidence>